<evidence type="ECO:0000255" key="1"/>
<evidence type="ECO:0000305" key="2"/>
<reference key="1">
    <citation type="journal article" date="1996" name="DNA Res.">
        <title>A 718-kb DNA sequence of the Escherichia coli K-12 genome corresponding to the 12.7-28.0 min region on the linkage map.</title>
        <authorList>
            <person name="Oshima T."/>
            <person name="Aiba H."/>
            <person name="Baba T."/>
            <person name="Fujita K."/>
            <person name="Hayashi K."/>
            <person name="Honjo A."/>
            <person name="Ikemoto K."/>
            <person name="Inada T."/>
            <person name="Itoh T."/>
            <person name="Kajihara M."/>
            <person name="Kanai K."/>
            <person name="Kashimoto K."/>
            <person name="Kimura S."/>
            <person name="Kitagawa M."/>
            <person name="Makino K."/>
            <person name="Masuda S."/>
            <person name="Miki T."/>
            <person name="Mizobuchi K."/>
            <person name="Mori H."/>
            <person name="Motomura K."/>
            <person name="Nakamura Y."/>
            <person name="Nashimoto H."/>
            <person name="Nishio Y."/>
            <person name="Saito N."/>
            <person name="Sampei G."/>
            <person name="Seki Y."/>
            <person name="Tagami H."/>
            <person name="Takemoto K."/>
            <person name="Wada C."/>
            <person name="Yamamoto Y."/>
            <person name="Yano M."/>
            <person name="Horiuchi T."/>
        </authorList>
    </citation>
    <scope>NUCLEOTIDE SEQUENCE [LARGE SCALE GENOMIC DNA]</scope>
    <source>
        <strain>K12 / W3110 / ATCC 27325 / DSM 5911</strain>
    </source>
</reference>
<reference key="2">
    <citation type="journal article" date="1997" name="Science">
        <title>The complete genome sequence of Escherichia coli K-12.</title>
        <authorList>
            <person name="Blattner F.R."/>
            <person name="Plunkett G. III"/>
            <person name="Bloch C.A."/>
            <person name="Perna N.T."/>
            <person name="Burland V."/>
            <person name="Riley M."/>
            <person name="Collado-Vides J."/>
            <person name="Glasner J.D."/>
            <person name="Rode C.K."/>
            <person name="Mayhew G.F."/>
            <person name="Gregor J."/>
            <person name="Davis N.W."/>
            <person name="Kirkpatrick H.A."/>
            <person name="Goeden M.A."/>
            <person name="Rose D.J."/>
            <person name="Mau B."/>
            <person name="Shao Y."/>
        </authorList>
    </citation>
    <scope>NUCLEOTIDE SEQUENCE [LARGE SCALE GENOMIC DNA]</scope>
    <source>
        <strain>K12 / MG1655 / ATCC 47076</strain>
    </source>
</reference>
<reference key="3">
    <citation type="journal article" date="2006" name="Mol. Syst. Biol.">
        <title>Highly accurate genome sequences of Escherichia coli K-12 strains MG1655 and W3110.</title>
        <authorList>
            <person name="Hayashi K."/>
            <person name="Morooka N."/>
            <person name="Yamamoto Y."/>
            <person name="Fujita K."/>
            <person name="Isono K."/>
            <person name="Choi S."/>
            <person name="Ohtsubo E."/>
            <person name="Baba T."/>
            <person name="Wanner B.L."/>
            <person name="Mori H."/>
            <person name="Horiuchi T."/>
        </authorList>
    </citation>
    <scope>NUCLEOTIDE SEQUENCE [LARGE SCALE GENOMIC DNA]</scope>
    <source>
        <strain>K12 / W3110 / ATCC 27325 / DSM 5911</strain>
    </source>
</reference>
<reference key="4">
    <citation type="journal article" date="1999" name="J. Bacteriol.">
        <title>The mdoC gene of Escherichia coli encodes a membrane protein that is required for succinylation of osmoregulated periplasmic glucans.</title>
        <authorList>
            <person name="Lacroix J.-M."/>
            <person name="Lanfroy E."/>
            <person name="Cogez V."/>
            <person name="Lequette Y."/>
            <person name="Bohin A."/>
            <person name="Bohin J.-P."/>
        </authorList>
    </citation>
    <scope>CHARACTERIZATION</scope>
</reference>
<keyword id="KW-0012">Acyltransferase</keyword>
<keyword id="KW-1003">Cell membrane</keyword>
<keyword id="KW-0472">Membrane</keyword>
<keyword id="KW-1185">Reference proteome</keyword>
<keyword id="KW-0808">Transferase</keyword>
<keyword id="KW-0812">Transmembrane</keyword>
<keyword id="KW-1133">Transmembrane helix</keyword>
<organism>
    <name type="scientific">Escherichia coli (strain K12)</name>
    <dbReference type="NCBI Taxonomy" id="83333"/>
    <lineage>
        <taxon>Bacteria</taxon>
        <taxon>Pseudomonadati</taxon>
        <taxon>Pseudomonadota</taxon>
        <taxon>Gammaproteobacteria</taxon>
        <taxon>Enterobacterales</taxon>
        <taxon>Enterobacteriaceae</taxon>
        <taxon>Escherichia</taxon>
    </lineage>
</organism>
<comment type="function">
    <text>Necessary for the succinyl substitution of periplasmic glucans. Could catalyze the transfer of succinyl residues from the cytoplasmic side of the membrane to the nascent glucan backbones on the periplasmic side of the membrane.</text>
</comment>
<comment type="pathway">
    <text>Glycan metabolism; osmoregulated periplasmic glucan (OPG) biosynthesis.</text>
</comment>
<comment type="subcellular location">
    <subcellularLocation>
        <location evidence="2">Cell membrane</location>
        <topology evidence="2">Multi-pass membrane protein</topology>
    </subcellularLocation>
</comment>
<comment type="similarity">
    <text evidence="2">Belongs to the acyltransferase 3 family. OpgC subfamily.</text>
</comment>
<protein>
    <recommendedName>
        <fullName>Glucans biosynthesis protein C</fullName>
        <ecNumber>2.1.-.-</ecNumber>
    </recommendedName>
</protein>
<feature type="chain" id="PRO_0000218049" description="Glucans biosynthesis protein C">
    <location>
        <begin position="1"/>
        <end position="385"/>
    </location>
</feature>
<feature type="transmembrane region" description="Helical" evidence="1">
    <location>
        <begin position="17"/>
        <end position="37"/>
    </location>
</feature>
<feature type="transmembrane region" description="Helical" evidence="1">
    <location>
        <begin position="60"/>
        <end position="80"/>
    </location>
</feature>
<feature type="transmembrane region" description="Helical" evidence="1">
    <location>
        <begin position="91"/>
        <end position="111"/>
    </location>
</feature>
<feature type="transmembrane region" description="Helical" evidence="1">
    <location>
        <begin position="137"/>
        <end position="157"/>
    </location>
</feature>
<feature type="transmembrane region" description="Helical" evidence="1">
    <location>
        <begin position="173"/>
        <end position="193"/>
    </location>
</feature>
<feature type="transmembrane region" description="Helical" evidence="1">
    <location>
        <begin position="213"/>
        <end position="233"/>
    </location>
</feature>
<feature type="transmembrane region" description="Helical" evidence="1">
    <location>
        <begin position="239"/>
        <end position="259"/>
    </location>
</feature>
<feature type="transmembrane region" description="Helical" evidence="1">
    <location>
        <begin position="274"/>
        <end position="294"/>
    </location>
</feature>
<feature type="transmembrane region" description="Helical" evidence="1">
    <location>
        <begin position="311"/>
        <end position="331"/>
    </location>
</feature>
<feature type="transmembrane region" description="Helical" evidence="1">
    <location>
        <begin position="338"/>
        <end position="358"/>
    </location>
</feature>
<sequence>MNPVPAQREYFLDSIRAWLMLLGIPFHISLIYSSHTWHVNSAESSLWLTLFNDFIHSFRMQVFFVISGYFSYMLFLRYPLKKWWKVRVERVGIPMLTAIPLLTLPQFIMLQYVKGKAESWPGLSLYDKYNTLAWELISHLWFLLVLVVMTTLCVWIFKRIRNNLENSDKTNKKFSMVKLSVIFLCLGIGYAVIRRTIFIVYPPILSNGMFNFIVMQTLFYLPFFILGALAFIFPHLKALFTTPSRGCTLAAALAFVAYLLNQRYGSGDAWMYETESVITMVLGLWMVNVVFSFGHRLLNFQSARVTYFVNASLFIYLVHHPLTLFFGAYITPHITSNWLGFLCGLIFVVGIAIILYEIHLRIPLLKFLFSGKPVVKRENDKAPAR</sequence>
<name>OPGC_ECOLI</name>
<gene>
    <name type="primary">mdoC</name>
    <name type="synonym">opgC</name>
    <name type="synonym">ymdD</name>
    <name type="ordered locus">b1047</name>
    <name type="ordered locus">JW1034</name>
</gene>
<dbReference type="EC" id="2.1.-.-"/>
<dbReference type="EMBL" id="U00096">
    <property type="protein sequence ID" value="AAC74131.1"/>
    <property type="molecule type" value="Genomic_DNA"/>
</dbReference>
<dbReference type="EMBL" id="AP009048">
    <property type="protein sequence ID" value="BAA35837.1"/>
    <property type="molecule type" value="Genomic_DNA"/>
</dbReference>
<dbReference type="PIR" id="D64847">
    <property type="entry name" value="D64847"/>
</dbReference>
<dbReference type="RefSeq" id="NP_415565.1">
    <property type="nucleotide sequence ID" value="NC_000913.3"/>
</dbReference>
<dbReference type="RefSeq" id="WP_001070375.1">
    <property type="nucleotide sequence ID" value="NZ_SSZK01000058.1"/>
</dbReference>
<dbReference type="BioGRID" id="4260688">
    <property type="interactions" value="280"/>
</dbReference>
<dbReference type="FunCoup" id="P75920">
    <property type="interactions" value="9"/>
</dbReference>
<dbReference type="STRING" id="511145.b1047"/>
<dbReference type="TCDB" id="9.B.97.7.1">
    <property type="family name" value="the acyltransferase-3/putative acetyl-coa transporter (atat) family"/>
</dbReference>
<dbReference type="PaxDb" id="511145-b1047"/>
<dbReference type="EnsemblBacteria" id="AAC74131">
    <property type="protein sequence ID" value="AAC74131"/>
    <property type="gene ID" value="b1047"/>
</dbReference>
<dbReference type="GeneID" id="75203635"/>
<dbReference type="GeneID" id="946944"/>
<dbReference type="KEGG" id="ecj:JW1034"/>
<dbReference type="KEGG" id="eco:b1047"/>
<dbReference type="KEGG" id="ecoc:C3026_06370"/>
<dbReference type="PATRIC" id="fig|1411691.4.peg.1222"/>
<dbReference type="EchoBASE" id="EB3635"/>
<dbReference type="eggNOG" id="COG1835">
    <property type="taxonomic scope" value="Bacteria"/>
</dbReference>
<dbReference type="HOGENOM" id="CLU_036182_2_0_6"/>
<dbReference type="InParanoid" id="P75920"/>
<dbReference type="OMA" id="AEWLQWP"/>
<dbReference type="OrthoDB" id="341887at2"/>
<dbReference type="PhylomeDB" id="P75920"/>
<dbReference type="BioCyc" id="EcoCyc:G6552-MONOMER"/>
<dbReference type="UniPathway" id="UPA00637"/>
<dbReference type="PRO" id="PR:P75920"/>
<dbReference type="Proteomes" id="UP000000625">
    <property type="component" value="Chromosome"/>
</dbReference>
<dbReference type="GO" id="GO:0005886">
    <property type="term" value="C:plasma membrane"/>
    <property type="evidence" value="ECO:0000255"/>
    <property type="project" value="EcoCyc"/>
</dbReference>
<dbReference type="GO" id="GO:0016748">
    <property type="term" value="F:succinyltransferase activity"/>
    <property type="evidence" value="ECO:0000315"/>
    <property type="project" value="EcoCyc"/>
</dbReference>
<dbReference type="GO" id="GO:0016741">
    <property type="term" value="F:transferase activity, transferring one-carbon groups"/>
    <property type="evidence" value="ECO:0007669"/>
    <property type="project" value="UniProtKB-UniRule"/>
</dbReference>
<dbReference type="GO" id="GO:1900727">
    <property type="term" value="P:osmoregulated periplasmic glucan biosynthetic process"/>
    <property type="evidence" value="ECO:0000315"/>
    <property type="project" value="EcoCyc"/>
</dbReference>
<dbReference type="HAMAP" id="MF_01066">
    <property type="entry name" value="MdoC_OpgC"/>
    <property type="match status" value="1"/>
</dbReference>
<dbReference type="InterPro" id="IPR002656">
    <property type="entry name" value="Acyl_transf_3_dom"/>
</dbReference>
<dbReference type="InterPro" id="IPR050623">
    <property type="entry name" value="Glucan_succinyl_AcylTrfase"/>
</dbReference>
<dbReference type="InterPro" id="IPR023723">
    <property type="entry name" value="Glucans_biosynth_C"/>
</dbReference>
<dbReference type="NCBIfam" id="NF003014">
    <property type="entry name" value="PRK03854.1"/>
    <property type="match status" value="1"/>
</dbReference>
<dbReference type="PANTHER" id="PTHR36927">
    <property type="entry name" value="BLR4337 PROTEIN"/>
    <property type="match status" value="1"/>
</dbReference>
<dbReference type="PANTHER" id="PTHR36927:SF3">
    <property type="entry name" value="GLUCANS BIOSYNTHESIS PROTEIN C"/>
    <property type="match status" value="1"/>
</dbReference>
<dbReference type="Pfam" id="PF01757">
    <property type="entry name" value="Acyl_transf_3"/>
    <property type="match status" value="1"/>
</dbReference>
<accession>P75920</accession>
<proteinExistence type="evidence at protein level"/>